<dbReference type="EMBL" id="BA000004">
    <property type="protein sequence ID" value="BAB04943.1"/>
    <property type="molecule type" value="Genomic_DNA"/>
</dbReference>
<dbReference type="PIR" id="H83802">
    <property type="entry name" value="H83802"/>
</dbReference>
<dbReference type="RefSeq" id="WP_010897392.1">
    <property type="nucleotide sequence ID" value="NC_002570.2"/>
</dbReference>
<dbReference type="SMR" id="Q9KDI9"/>
<dbReference type="STRING" id="272558.gene:10727118"/>
<dbReference type="KEGG" id="bha:BH1224"/>
<dbReference type="eggNOG" id="COG0632">
    <property type="taxonomic scope" value="Bacteria"/>
</dbReference>
<dbReference type="HOGENOM" id="CLU_087936_1_0_9"/>
<dbReference type="OrthoDB" id="5293449at2"/>
<dbReference type="Proteomes" id="UP000001258">
    <property type="component" value="Chromosome"/>
</dbReference>
<dbReference type="GO" id="GO:0005737">
    <property type="term" value="C:cytoplasm"/>
    <property type="evidence" value="ECO:0007669"/>
    <property type="project" value="UniProtKB-SubCell"/>
</dbReference>
<dbReference type="GO" id="GO:0009379">
    <property type="term" value="C:Holliday junction helicase complex"/>
    <property type="evidence" value="ECO:0007669"/>
    <property type="project" value="InterPro"/>
</dbReference>
<dbReference type="GO" id="GO:0048476">
    <property type="term" value="C:Holliday junction resolvase complex"/>
    <property type="evidence" value="ECO:0007669"/>
    <property type="project" value="UniProtKB-UniRule"/>
</dbReference>
<dbReference type="GO" id="GO:0005524">
    <property type="term" value="F:ATP binding"/>
    <property type="evidence" value="ECO:0007669"/>
    <property type="project" value="InterPro"/>
</dbReference>
<dbReference type="GO" id="GO:0000400">
    <property type="term" value="F:four-way junction DNA binding"/>
    <property type="evidence" value="ECO:0007669"/>
    <property type="project" value="UniProtKB-UniRule"/>
</dbReference>
<dbReference type="GO" id="GO:0009378">
    <property type="term" value="F:four-way junction helicase activity"/>
    <property type="evidence" value="ECO:0007669"/>
    <property type="project" value="InterPro"/>
</dbReference>
<dbReference type="GO" id="GO:0006310">
    <property type="term" value="P:DNA recombination"/>
    <property type="evidence" value="ECO:0007669"/>
    <property type="project" value="UniProtKB-UniRule"/>
</dbReference>
<dbReference type="GO" id="GO:0006281">
    <property type="term" value="P:DNA repair"/>
    <property type="evidence" value="ECO:0007669"/>
    <property type="project" value="UniProtKB-UniRule"/>
</dbReference>
<dbReference type="CDD" id="cd14332">
    <property type="entry name" value="UBA_RuvA_C"/>
    <property type="match status" value="1"/>
</dbReference>
<dbReference type="Gene3D" id="1.10.150.20">
    <property type="entry name" value="5' to 3' exonuclease, C-terminal subdomain"/>
    <property type="match status" value="1"/>
</dbReference>
<dbReference type="Gene3D" id="1.10.8.10">
    <property type="entry name" value="DNA helicase RuvA subunit, C-terminal domain"/>
    <property type="match status" value="1"/>
</dbReference>
<dbReference type="Gene3D" id="2.40.50.140">
    <property type="entry name" value="Nucleic acid-binding proteins"/>
    <property type="match status" value="1"/>
</dbReference>
<dbReference type="HAMAP" id="MF_00031">
    <property type="entry name" value="DNA_HJ_migration_RuvA"/>
    <property type="match status" value="1"/>
</dbReference>
<dbReference type="InterPro" id="IPR013849">
    <property type="entry name" value="DNA_helicase_Holl-junc_RuvA_I"/>
</dbReference>
<dbReference type="InterPro" id="IPR003583">
    <property type="entry name" value="Hlx-hairpin-Hlx_DNA-bd_motif"/>
</dbReference>
<dbReference type="InterPro" id="IPR012340">
    <property type="entry name" value="NA-bd_OB-fold"/>
</dbReference>
<dbReference type="InterPro" id="IPR000085">
    <property type="entry name" value="RuvA"/>
</dbReference>
<dbReference type="InterPro" id="IPR010994">
    <property type="entry name" value="RuvA_2-like"/>
</dbReference>
<dbReference type="InterPro" id="IPR011114">
    <property type="entry name" value="RuvA_C"/>
</dbReference>
<dbReference type="InterPro" id="IPR036267">
    <property type="entry name" value="RuvA_C_sf"/>
</dbReference>
<dbReference type="NCBIfam" id="TIGR00084">
    <property type="entry name" value="ruvA"/>
    <property type="match status" value="1"/>
</dbReference>
<dbReference type="Pfam" id="PF14520">
    <property type="entry name" value="HHH_5"/>
    <property type="match status" value="1"/>
</dbReference>
<dbReference type="Pfam" id="PF07499">
    <property type="entry name" value="RuvA_C"/>
    <property type="match status" value="1"/>
</dbReference>
<dbReference type="Pfam" id="PF01330">
    <property type="entry name" value="RuvA_N"/>
    <property type="match status" value="1"/>
</dbReference>
<dbReference type="SMART" id="SM00278">
    <property type="entry name" value="HhH1"/>
    <property type="match status" value="2"/>
</dbReference>
<dbReference type="SUPFAM" id="SSF46929">
    <property type="entry name" value="DNA helicase RuvA subunit, C-terminal domain"/>
    <property type="match status" value="1"/>
</dbReference>
<dbReference type="SUPFAM" id="SSF50249">
    <property type="entry name" value="Nucleic acid-binding proteins"/>
    <property type="match status" value="1"/>
</dbReference>
<dbReference type="SUPFAM" id="SSF47781">
    <property type="entry name" value="RuvA domain 2-like"/>
    <property type="match status" value="1"/>
</dbReference>
<gene>
    <name evidence="1" type="primary">ruvA</name>
    <name type="ordered locus">BH1224</name>
</gene>
<name>RUVA_HALH5</name>
<evidence type="ECO:0000255" key="1">
    <source>
        <dbReference type="HAMAP-Rule" id="MF_00031"/>
    </source>
</evidence>
<comment type="function">
    <text evidence="1">The RuvA-RuvB-RuvC complex processes Holliday junction (HJ) DNA during genetic recombination and DNA repair, while the RuvA-RuvB complex plays an important role in the rescue of blocked DNA replication forks via replication fork reversal (RFR). RuvA specifically binds to HJ cruciform DNA, conferring on it an open structure. The RuvB hexamer acts as an ATP-dependent pump, pulling dsDNA into and through the RuvAB complex. HJ branch migration allows RuvC to scan DNA until it finds its consensus sequence, where it cleaves and resolves the cruciform DNA.</text>
</comment>
<comment type="subunit">
    <text evidence="1">Homotetramer. Forms an RuvA(8)-RuvB(12)-Holliday junction (HJ) complex. HJ DNA is sandwiched between 2 RuvA tetramers; dsDNA enters through RuvA and exits via RuvB. An RuvB hexamer assembles on each DNA strand where it exits the tetramer. Each RuvB hexamer is contacted by two RuvA subunits (via domain III) on 2 adjacent RuvB subunits; this complex drives branch migration. In the full resolvosome a probable DNA-RuvA(4)-RuvB(12)-RuvC(2) complex forms which resolves the HJ.</text>
</comment>
<comment type="subcellular location">
    <subcellularLocation>
        <location evidence="1">Cytoplasm</location>
    </subcellularLocation>
</comment>
<comment type="domain">
    <text evidence="1">Has three domains with a flexible linker between the domains II and III and assumes an 'L' shape. Domain III is highly mobile and contacts RuvB.</text>
</comment>
<comment type="similarity">
    <text evidence="1">Belongs to the RuvA family.</text>
</comment>
<keyword id="KW-0963">Cytoplasm</keyword>
<keyword id="KW-0227">DNA damage</keyword>
<keyword id="KW-0233">DNA recombination</keyword>
<keyword id="KW-0234">DNA repair</keyword>
<keyword id="KW-0238">DNA-binding</keyword>
<keyword id="KW-1185">Reference proteome</keyword>
<accession>Q9KDI9</accession>
<protein>
    <recommendedName>
        <fullName evidence="1">Holliday junction branch migration complex subunit RuvA</fullName>
    </recommendedName>
</protein>
<feature type="chain" id="PRO_0000094601" description="Holliday junction branch migration complex subunit RuvA">
    <location>
        <begin position="1"/>
        <end position="203"/>
    </location>
</feature>
<feature type="region of interest" description="Domain I" evidence="1">
    <location>
        <begin position="1"/>
        <end position="63"/>
    </location>
</feature>
<feature type="region of interest" description="Domain II" evidence="1">
    <location>
        <begin position="64"/>
        <end position="142"/>
    </location>
</feature>
<feature type="region of interest" description="Flexible linker" evidence="1">
    <location>
        <begin position="143"/>
        <end position="152"/>
    </location>
</feature>
<feature type="region of interest" description="Domain III" evidence="1">
    <location>
        <begin position="153"/>
        <end position="203"/>
    </location>
</feature>
<proteinExistence type="inferred from homology"/>
<reference key="1">
    <citation type="journal article" date="2000" name="Nucleic Acids Res.">
        <title>Complete genome sequence of the alkaliphilic bacterium Bacillus halodurans and genomic sequence comparison with Bacillus subtilis.</title>
        <authorList>
            <person name="Takami H."/>
            <person name="Nakasone K."/>
            <person name="Takaki Y."/>
            <person name="Maeno G."/>
            <person name="Sasaki R."/>
            <person name="Masui N."/>
            <person name="Fuji F."/>
            <person name="Hirama C."/>
            <person name="Nakamura Y."/>
            <person name="Ogasawara N."/>
            <person name="Kuhara S."/>
            <person name="Horikoshi K."/>
        </authorList>
    </citation>
    <scope>NUCLEOTIDE SEQUENCE [LARGE SCALE GENOMIC DNA]</scope>
    <source>
        <strain>ATCC BAA-125 / DSM 18197 / FERM 7344 / JCM 9153 / C-125</strain>
    </source>
</reference>
<organism>
    <name type="scientific">Halalkalibacterium halodurans (strain ATCC BAA-125 / DSM 18197 / FERM 7344 / JCM 9153 / C-125)</name>
    <name type="common">Bacillus halodurans</name>
    <dbReference type="NCBI Taxonomy" id="272558"/>
    <lineage>
        <taxon>Bacteria</taxon>
        <taxon>Bacillati</taxon>
        <taxon>Bacillota</taxon>
        <taxon>Bacilli</taxon>
        <taxon>Bacillales</taxon>
        <taxon>Bacillaceae</taxon>
        <taxon>Halalkalibacterium (ex Joshi et al. 2022)</taxon>
    </lineage>
</organism>
<sequence>MIDYLRGTLTDIDHQYAVVEVHGVGYQVYCPNPYEFEKERDSVITIYTFQYVREDVIRLYGFRTKEKRSLFEKLLNVSGIGPKGALAILATGQPEHVIQAIEEEDEAFLVKFPGVGKKTARQIILDLKGKVDELHPGLFSQKEEQPKPHEKNDGNQALDEAMEALKALGYVEKELKKVKPKLEQETLTTDAYIKKALQLMLNR</sequence>